<proteinExistence type="evidence at protein level"/>
<evidence type="ECO:0000250" key="1">
    <source>
        <dbReference type="UniProtKB" id="P04798"/>
    </source>
</evidence>
<evidence type="ECO:0000255" key="2"/>
<evidence type="ECO:0000255" key="3">
    <source>
        <dbReference type="PROSITE-ProRule" id="PRU00498"/>
    </source>
</evidence>
<evidence type="ECO:0000269" key="4">
    <source>
    </source>
</evidence>
<evidence type="ECO:0000303" key="5">
    <source>
    </source>
</evidence>
<evidence type="ECO:0000305" key="6"/>
<dbReference type="EC" id="1.-.-.-" evidence="4"/>
<dbReference type="EMBL" id="AB573260">
    <property type="protein sequence ID" value="BAK09393.1"/>
    <property type="molecule type" value="mRNA"/>
</dbReference>
<dbReference type="SMR" id="F1SY49"/>
<dbReference type="GlyCosmos" id="F1SY49">
    <property type="glycosylation" value="2 sites, No reported glycans"/>
</dbReference>
<dbReference type="GO" id="GO:0016020">
    <property type="term" value="C:membrane"/>
    <property type="evidence" value="ECO:0007669"/>
    <property type="project" value="UniProtKB-SubCell"/>
</dbReference>
<dbReference type="GO" id="GO:0020037">
    <property type="term" value="F:heme binding"/>
    <property type="evidence" value="ECO:0007669"/>
    <property type="project" value="InterPro"/>
</dbReference>
<dbReference type="GO" id="GO:0005506">
    <property type="term" value="F:iron ion binding"/>
    <property type="evidence" value="ECO:0007669"/>
    <property type="project" value="InterPro"/>
</dbReference>
<dbReference type="GO" id="GO:0004497">
    <property type="term" value="F:monooxygenase activity"/>
    <property type="evidence" value="ECO:0007669"/>
    <property type="project" value="UniProtKB-KW"/>
</dbReference>
<dbReference type="GO" id="GO:0016705">
    <property type="term" value="F:oxidoreductase activity, acting on paired donors, with incorporation or reduction of molecular oxygen"/>
    <property type="evidence" value="ECO:0007669"/>
    <property type="project" value="InterPro"/>
</dbReference>
<dbReference type="CDD" id="cd11061">
    <property type="entry name" value="CYP67-like"/>
    <property type="match status" value="1"/>
</dbReference>
<dbReference type="Gene3D" id="1.10.630.10">
    <property type="entry name" value="Cytochrome P450"/>
    <property type="match status" value="1"/>
</dbReference>
<dbReference type="InterPro" id="IPR001128">
    <property type="entry name" value="Cyt_P450"/>
</dbReference>
<dbReference type="InterPro" id="IPR017972">
    <property type="entry name" value="Cyt_P450_CS"/>
</dbReference>
<dbReference type="InterPro" id="IPR002401">
    <property type="entry name" value="Cyt_P450_E_grp-I"/>
</dbReference>
<dbReference type="InterPro" id="IPR036396">
    <property type="entry name" value="Cyt_P450_sf"/>
</dbReference>
<dbReference type="InterPro" id="IPR050121">
    <property type="entry name" value="Cytochrome_P450_monoxygenase"/>
</dbReference>
<dbReference type="PANTHER" id="PTHR24305:SF29">
    <property type="entry name" value="BENZOATE-PARA-HYDROXYLASE"/>
    <property type="match status" value="1"/>
</dbReference>
<dbReference type="PANTHER" id="PTHR24305">
    <property type="entry name" value="CYTOCHROME P450"/>
    <property type="match status" value="1"/>
</dbReference>
<dbReference type="Pfam" id="PF00067">
    <property type="entry name" value="p450"/>
    <property type="match status" value="1"/>
</dbReference>
<dbReference type="PRINTS" id="PR00463">
    <property type="entry name" value="EP450I"/>
</dbReference>
<dbReference type="PRINTS" id="PR00385">
    <property type="entry name" value="P450"/>
</dbReference>
<dbReference type="SUPFAM" id="SSF48264">
    <property type="entry name" value="Cytochrome P450"/>
    <property type="match status" value="1"/>
</dbReference>
<dbReference type="PROSITE" id="PS00086">
    <property type="entry name" value="CYTOCHROME_P450"/>
    <property type="match status" value="1"/>
</dbReference>
<comment type="function">
    <text evidence="4">Cytochrome P450 monooxygenase that is able to use 3,5-dimethoxy-trans-stilbene and 3,5,4'-trimethoxy-trans-stilbene as substrates for oxidation.</text>
</comment>
<comment type="cofactor">
    <cofactor evidence="1">
        <name>heme</name>
        <dbReference type="ChEBI" id="CHEBI:30413"/>
    </cofactor>
</comment>
<comment type="pathway">
    <text evidence="6">Secondary metabolite biosynthesis.</text>
</comment>
<comment type="subcellular location">
    <subcellularLocation>
        <location evidence="2">Membrane</location>
        <topology evidence="2">Single-pass membrane protein</topology>
    </subcellularLocation>
</comment>
<comment type="similarity">
    <text evidence="6">Belongs to the cytochrome P450 family.</text>
</comment>
<name>CY041_POSPM</name>
<organism>
    <name type="scientific">Postia placenta (strain ATCC 44394 / Madison 698-R)</name>
    <name type="common">Brown rot fungus</name>
    <name type="synonym">Poria monticola</name>
    <dbReference type="NCBI Taxonomy" id="561896"/>
    <lineage>
        <taxon>Eukaryota</taxon>
        <taxon>Fungi</taxon>
        <taxon>Dikarya</taxon>
        <taxon>Basidiomycota</taxon>
        <taxon>Agaricomycotina</taxon>
        <taxon>Agaricomycetes</taxon>
        <taxon>Polyporales</taxon>
        <taxon>Adustoporiaceae</taxon>
        <taxon>Rhodonia</taxon>
    </lineage>
</organism>
<keyword id="KW-0325">Glycoprotein</keyword>
<keyword id="KW-0349">Heme</keyword>
<keyword id="KW-0408">Iron</keyword>
<keyword id="KW-0472">Membrane</keyword>
<keyword id="KW-0479">Metal-binding</keyword>
<keyword id="KW-0503">Monooxygenase</keyword>
<keyword id="KW-0560">Oxidoreductase</keyword>
<keyword id="KW-0812">Transmembrane</keyword>
<keyword id="KW-1133">Transmembrane helix</keyword>
<reference key="1">
    <citation type="journal article" date="2012" name="Arch. Microbiol.">
        <title>Molecular identification and functional characterization of cytochrome P450 monooxygenases from the brown-rot basidiomycete Postia placenta.</title>
        <authorList>
            <person name="Ide M."/>
            <person name="Ichinose H."/>
            <person name="Wariishi H."/>
        </authorList>
    </citation>
    <scope>NUCLEOTIDE SEQUENCE [MRNA]</scope>
    <scope>IDENTIFICATION</scope>
    <scope>FUNCTION</scope>
    <scope>CATALYTIC ACTIVITY</scope>
    <source>
        <strain>ATCC 44394 / Madison 698-R</strain>
    </source>
</reference>
<protein>
    <recommendedName>
        <fullName evidence="5">Cytochrome P450 monooxygenase 41</fullName>
        <ecNumber evidence="4">1.-.-.-</ecNumber>
    </recommendedName>
</protein>
<gene>
    <name evidence="5" type="primary">CYP041</name>
    <name evidence="5" type="synonym">CYP53D2v1</name>
</gene>
<feature type="chain" id="PRO_0000451398" description="Cytochrome P450 monooxygenase 41">
    <location>
        <begin position="1"/>
        <end position="568"/>
    </location>
</feature>
<feature type="transmembrane region" description="Helical" evidence="2">
    <location>
        <begin position="21"/>
        <end position="41"/>
    </location>
</feature>
<feature type="binding site" description="axial binding residue" evidence="1">
    <location>
        <position position="514"/>
    </location>
    <ligand>
        <name>heme</name>
        <dbReference type="ChEBI" id="CHEBI:30413"/>
    </ligand>
    <ligandPart>
        <name>Fe</name>
        <dbReference type="ChEBI" id="CHEBI:18248"/>
    </ligandPart>
</feature>
<feature type="glycosylation site" description="N-linked (GlcNAc...) asparagine" evidence="3">
    <location>
        <position position="321"/>
    </location>
</feature>
<feature type="glycosylation site" description="N-linked (GlcNAc...) asparagine" evidence="3">
    <location>
        <position position="377"/>
    </location>
</feature>
<sequence>MDSSTSLLPPLGSIILACEGLTSLVPLILSVMVCLIATVTISPTLLAYFNDPFELRAYPGPFLARFTSAWISWIISQNRWSETVDLMHRQHGPIVRLSPDHVSVASPAAFAAVYGHSSGALKAPFYNAFANFKIRSIFNTRDRAEHSRKRRVEAHMFSPRSIRALEDTARVHFQVLVRQWDALCAPTGKTVRGSAEGTLGTISWKVHGDRVWFDCMPWFNFWSFDTISDLAFGRPFGMLEAAKGSAHVSKSNTKSVQAVSQDTSHSNEAQSELLEIPAMEVLSELLDFTVALAYLPAWVQPVFGRLPMFRDGYDAAPKLANLSLTAVANRVASQTDRADMLSELLRGRDEEGKPYGLEELSTEAELLIIAGGDTTANTSCATAYYIARDLQIQAKLQAELDVALDGVESDVAPYDAVKDLPYLDAVINEGLRLHSTIGAGLPRVVPSGGMTVLGQHLKEGTVVSSPIYTLHRNEAVWGKNAYEFYPERWLEASADAKKEMMQSFAPFSVGPRACLGRSLALQQLHILLATIFHRYSLVLENNAPAQLPLRDGFARKPMKCIVGVQRRK</sequence>
<accession>F1SY49</accession>